<gene>
    <name evidence="1" type="primary">atpH</name>
    <name type="ordered locus">Atu2625</name>
    <name type="ORF">AGR_C_4759</name>
</gene>
<sequence>MPVAETSQGTSGVAERYASSLFELALEAGTVEAVQVELDKFGALLDESDDLKRLVASPVFSAEDQFKAISAICEKAGIAGLAVNFLKVVANNRRLFAVPGMIRAYRTIAAAHRGEITAEVTSAHALDEAQETELKAALKSVTGKDVAISVTVDPSILGGLIVKVGSRQIDTSLRTKLSTLKLALKEVG</sequence>
<comment type="function">
    <text evidence="1">F(1)F(0) ATP synthase produces ATP from ADP in the presence of a proton or sodium gradient. F-type ATPases consist of two structural domains, F(1) containing the extramembraneous catalytic core and F(0) containing the membrane proton channel, linked together by a central stalk and a peripheral stalk. During catalysis, ATP synthesis in the catalytic domain of F(1) is coupled via a rotary mechanism of the central stalk subunits to proton translocation.</text>
</comment>
<comment type="function">
    <text evidence="1">This protein is part of the stalk that links CF(0) to CF(1). It either transmits conformational changes from CF(0) to CF(1) or is implicated in proton conduction.</text>
</comment>
<comment type="subunit">
    <text evidence="1">F-type ATPases have 2 components, F(1) - the catalytic core - and F(0) - the membrane proton channel. F(1) has five subunits: alpha(3), beta(3), gamma(1), delta(1), epsilon(1). F(0) has three main subunits: a(1), b(2) and c(10-14). The alpha and beta chains form an alternating ring which encloses part of the gamma chain. F(1) is attached to F(0) by a central stalk formed by the gamma and epsilon chains, while a peripheral stalk is formed by the delta and b chains.</text>
</comment>
<comment type="subcellular location">
    <subcellularLocation>
        <location evidence="1">Cell inner membrane</location>
        <topology evidence="1">Peripheral membrane protein</topology>
    </subcellularLocation>
</comment>
<comment type="similarity">
    <text evidence="1">Belongs to the ATPase delta chain family.</text>
</comment>
<comment type="sequence caution" evidence="2">
    <conflict type="erroneous initiation">
        <sequence resource="EMBL-CDS" id="AAK88346"/>
    </conflict>
</comment>
<evidence type="ECO:0000255" key="1">
    <source>
        <dbReference type="HAMAP-Rule" id="MF_01416"/>
    </source>
</evidence>
<evidence type="ECO:0000305" key="2"/>
<feature type="chain" id="PRO_0000370874" description="ATP synthase subunit delta">
    <location>
        <begin position="1"/>
        <end position="188"/>
    </location>
</feature>
<name>ATPD_AGRFC</name>
<proteinExistence type="inferred from homology"/>
<organism>
    <name type="scientific">Agrobacterium fabrum (strain C58 / ATCC 33970)</name>
    <name type="common">Agrobacterium tumefaciens (strain C58)</name>
    <dbReference type="NCBI Taxonomy" id="176299"/>
    <lineage>
        <taxon>Bacteria</taxon>
        <taxon>Pseudomonadati</taxon>
        <taxon>Pseudomonadota</taxon>
        <taxon>Alphaproteobacteria</taxon>
        <taxon>Hyphomicrobiales</taxon>
        <taxon>Rhizobiaceae</taxon>
        <taxon>Rhizobium/Agrobacterium group</taxon>
        <taxon>Agrobacterium</taxon>
        <taxon>Agrobacterium tumefaciens complex</taxon>
    </lineage>
</organism>
<reference key="1">
    <citation type="journal article" date="2001" name="Science">
        <title>Genome sequence of the plant pathogen and biotechnology agent Agrobacterium tumefaciens C58.</title>
        <authorList>
            <person name="Goodner B."/>
            <person name="Hinkle G."/>
            <person name="Gattung S."/>
            <person name="Miller N."/>
            <person name="Blanchard M."/>
            <person name="Qurollo B."/>
            <person name="Goldman B.S."/>
            <person name="Cao Y."/>
            <person name="Askenazi M."/>
            <person name="Halling C."/>
            <person name="Mullin L."/>
            <person name="Houmiel K."/>
            <person name="Gordon J."/>
            <person name="Vaudin M."/>
            <person name="Iartchouk O."/>
            <person name="Epp A."/>
            <person name="Liu F."/>
            <person name="Wollam C."/>
            <person name="Allinger M."/>
            <person name="Doughty D."/>
            <person name="Scott C."/>
            <person name="Lappas C."/>
            <person name="Markelz B."/>
            <person name="Flanagan C."/>
            <person name="Crowell C."/>
            <person name="Gurson J."/>
            <person name="Lomo C."/>
            <person name="Sear C."/>
            <person name="Strub G."/>
            <person name="Cielo C."/>
            <person name="Slater S."/>
        </authorList>
    </citation>
    <scope>NUCLEOTIDE SEQUENCE [LARGE SCALE GENOMIC DNA]</scope>
    <source>
        <strain>C58 / ATCC 33970</strain>
    </source>
</reference>
<reference key="2">
    <citation type="journal article" date="2001" name="Science">
        <title>The genome of the natural genetic engineer Agrobacterium tumefaciens C58.</title>
        <authorList>
            <person name="Wood D.W."/>
            <person name="Setubal J.C."/>
            <person name="Kaul R."/>
            <person name="Monks D.E."/>
            <person name="Kitajima J.P."/>
            <person name="Okura V.K."/>
            <person name="Zhou Y."/>
            <person name="Chen L."/>
            <person name="Wood G.E."/>
            <person name="Almeida N.F. Jr."/>
            <person name="Woo L."/>
            <person name="Chen Y."/>
            <person name="Paulsen I.T."/>
            <person name="Eisen J.A."/>
            <person name="Karp P.D."/>
            <person name="Bovee D. Sr."/>
            <person name="Chapman P."/>
            <person name="Clendenning J."/>
            <person name="Deatherage G."/>
            <person name="Gillet W."/>
            <person name="Grant C."/>
            <person name="Kutyavin T."/>
            <person name="Levy R."/>
            <person name="Li M.-J."/>
            <person name="McClelland E."/>
            <person name="Palmieri A."/>
            <person name="Raymond C."/>
            <person name="Rouse G."/>
            <person name="Saenphimmachak C."/>
            <person name="Wu Z."/>
            <person name="Romero P."/>
            <person name="Gordon D."/>
            <person name="Zhang S."/>
            <person name="Yoo H."/>
            <person name="Tao Y."/>
            <person name="Biddle P."/>
            <person name="Jung M."/>
            <person name="Krespan W."/>
            <person name="Perry M."/>
            <person name="Gordon-Kamm B."/>
            <person name="Liao L."/>
            <person name="Kim S."/>
            <person name="Hendrick C."/>
            <person name="Zhao Z.-Y."/>
            <person name="Dolan M."/>
            <person name="Chumley F."/>
            <person name="Tingey S.V."/>
            <person name="Tomb J.-F."/>
            <person name="Gordon M.P."/>
            <person name="Olson M.V."/>
            <person name="Nester E.W."/>
        </authorList>
    </citation>
    <scope>NUCLEOTIDE SEQUENCE [LARGE SCALE GENOMIC DNA]</scope>
    <source>
        <strain>C58 / ATCC 33970</strain>
    </source>
</reference>
<dbReference type="EMBL" id="AE007869">
    <property type="protein sequence ID" value="AAK88346.2"/>
    <property type="status" value="ALT_INIT"/>
    <property type="molecule type" value="Genomic_DNA"/>
</dbReference>
<dbReference type="RefSeq" id="NP_355561.2">
    <property type="nucleotide sequence ID" value="NC_003062.2"/>
</dbReference>
<dbReference type="RefSeq" id="WP_169539095.1">
    <property type="nucleotide sequence ID" value="NC_003062.2"/>
</dbReference>
<dbReference type="SMR" id="Q7CWL8"/>
<dbReference type="STRING" id="176299.Atu2625"/>
<dbReference type="EnsemblBacteria" id="AAK88346">
    <property type="protein sequence ID" value="AAK88346"/>
    <property type="gene ID" value="Atu2625"/>
</dbReference>
<dbReference type="GeneID" id="1134663"/>
<dbReference type="KEGG" id="atu:Atu2625"/>
<dbReference type="PATRIC" id="fig|176299.10.peg.2628"/>
<dbReference type="eggNOG" id="COG0712">
    <property type="taxonomic scope" value="Bacteria"/>
</dbReference>
<dbReference type="HOGENOM" id="CLU_085114_0_1_5"/>
<dbReference type="OrthoDB" id="9796185at2"/>
<dbReference type="Proteomes" id="UP000000813">
    <property type="component" value="Chromosome circular"/>
</dbReference>
<dbReference type="GO" id="GO:0005886">
    <property type="term" value="C:plasma membrane"/>
    <property type="evidence" value="ECO:0007669"/>
    <property type="project" value="UniProtKB-SubCell"/>
</dbReference>
<dbReference type="GO" id="GO:0045259">
    <property type="term" value="C:proton-transporting ATP synthase complex"/>
    <property type="evidence" value="ECO:0007669"/>
    <property type="project" value="UniProtKB-KW"/>
</dbReference>
<dbReference type="GO" id="GO:0046933">
    <property type="term" value="F:proton-transporting ATP synthase activity, rotational mechanism"/>
    <property type="evidence" value="ECO:0007669"/>
    <property type="project" value="UniProtKB-UniRule"/>
</dbReference>
<dbReference type="Gene3D" id="1.10.520.20">
    <property type="entry name" value="N-terminal domain of the delta subunit of the F1F0-ATP synthase"/>
    <property type="match status" value="1"/>
</dbReference>
<dbReference type="HAMAP" id="MF_01416">
    <property type="entry name" value="ATP_synth_delta_bact"/>
    <property type="match status" value="1"/>
</dbReference>
<dbReference type="InterPro" id="IPR026015">
    <property type="entry name" value="ATP_synth_OSCP/delta_N_sf"/>
</dbReference>
<dbReference type="InterPro" id="IPR020781">
    <property type="entry name" value="ATPase_OSCP/d_CS"/>
</dbReference>
<dbReference type="InterPro" id="IPR000711">
    <property type="entry name" value="ATPase_OSCP/dsu"/>
</dbReference>
<dbReference type="NCBIfam" id="TIGR01145">
    <property type="entry name" value="ATP_synt_delta"/>
    <property type="match status" value="1"/>
</dbReference>
<dbReference type="NCBIfam" id="NF004402">
    <property type="entry name" value="PRK05758.2-2"/>
    <property type="match status" value="1"/>
</dbReference>
<dbReference type="NCBIfam" id="NF004406">
    <property type="entry name" value="PRK05758.3-2"/>
    <property type="match status" value="1"/>
</dbReference>
<dbReference type="PANTHER" id="PTHR11910">
    <property type="entry name" value="ATP SYNTHASE DELTA CHAIN"/>
    <property type="match status" value="1"/>
</dbReference>
<dbReference type="Pfam" id="PF00213">
    <property type="entry name" value="OSCP"/>
    <property type="match status" value="1"/>
</dbReference>
<dbReference type="PRINTS" id="PR00125">
    <property type="entry name" value="ATPASEDELTA"/>
</dbReference>
<dbReference type="SUPFAM" id="SSF47928">
    <property type="entry name" value="N-terminal domain of the delta subunit of the F1F0-ATP synthase"/>
    <property type="match status" value="1"/>
</dbReference>
<dbReference type="PROSITE" id="PS00389">
    <property type="entry name" value="ATPASE_DELTA"/>
    <property type="match status" value="1"/>
</dbReference>
<accession>Q7CWL8</accession>
<keyword id="KW-0066">ATP synthesis</keyword>
<keyword id="KW-0997">Cell inner membrane</keyword>
<keyword id="KW-1003">Cell membrane</keyword>
<keyword id="KW-0139">CF(1)</keyword>
<keyword id="KW-0375">Hydrogen ion transport</keyword>
<keyword id="KW-0406">Ion transport</keyword>
<keyword id="KW-0472">Membrane</keyword>
<keyword id="KW-1185">Reference proteome</keyword>
<keyword id="KW-0813">Transport</keyword>
<protein>
    <recommendedName>
        <fullName evidence="1">ATP synthase subunit delta</fullName>
    </recommendedName>
    <alternativeName>
        <fullName evidence="1">ATP synthase F(1) sector subunit delta</fullName>
    </alternativeName>
    <alternativeName>
        <fullName evidence="1">F-type ATPase subunit delta</fullName>
        <shortName evidence="1">F-ATPase subunit delta</shortName>
    </alternativeName>
</protein>